<gene>
    <name evidence="10" type="primary">ND-42</name>
    <name evidence="8 10" type="synonym">NdufA10</name>
    <name evidence="10" type="ORF">CG6343</name>
</gene>
<feature type="transit peptide" description="Mitochondrion" evidence="2 3">
    <location>
        <begin position="1"/>
        <end position="60"/>
    </location>
</feature>
<feature type="chain" id="PRO_0000019990" description="NADH dehydrogenase [ubiquinone] 1 alpha subcomplex subunit 10, mitochondrial">
    <location>
        <begin position="61"/>
        <end position="407"/>
    </location>
</feature>
<feature type="mutagenesis site" description="Localizes to cytoplasm." evidence="3">
    <location>
        <begin position="1"/>
        <end position="47"/>
    </location>
</feature>
<feature type="mutagenesis site" description="Does not rescue the phenotype of Pink1-null mutants which are unable to maintain neurotransmitter release at neuromuscular junctions (NMJ) during high-frequency stimulation (10 Hz). Rescues the climbing deficit of Pink1-null mutants." evidence="4 5">
    <original>S</original>
    <variation>A</variation>
    <location>
        <position position="281"/>
    </location>
</feature>
<feature type="mutagenesis site" description="Rescues some phenotypes of Pink1-null mutants by re-enabling maintained neurotransmitter release at neuromuscular junctions (NMJ) during high-frequency stimulation (10 Hz), by restoring mitochondria cristae structural organization and by improving climbing activity; does not restore muscle morphology and rescues only partially flight defects in the same mutants." evidence="4 5">
    <original>S</original>
    <variation>D</variation>
    <location>
        <position position="281"/>
    </location>
</feature>
<feature type="sequence conflict" description="In Ref. 4; CAA71852." evidence="9" ref="4">
    <original>H</original>
    <variation>R</variation>
    <location>
        <position position="177"/>
    </location>
</feature>
<feature type="sequence conflict" description="In Ref. 4; CAA71852." evidence="9" ref="4">
    <original>M</original>
    <variation>L</variation>
    <location>
        <position position="198"/>
    </location>
</feature>
<feature type="helix" evidence="11">
    <location>
        <begin position="43"/>
        <end position="46"/>
    </location>
</feature>
<feature type="turn" evidence="11">
    <location>
        <begin position="59"/>
        <end position="61"/>
    </location>
</feature>
<feature type="helix" evidence="11">
    <location>
        <begin position="66"/>
        <end position="69"/>
    </location>
</feature>
<feature type="helix" evidence="11">
    <location>
        <begin position="75"/>
        <end position="77"/>
    </location>
</feature>
<feature type="strand" evidence="11">
    <location>
        <begin position="84"/>
        <end position="88"/>
    </location>
</feature>
<feature type="helix" evidence="11">
    <location>
        <begin position="95"/>
        <end position="105"/>
    </location>
</feature>
<feature type="strand" evidence="11">
    <location>
        <begin position="109"/>
        <end position="111"/>
    </location>
</feature>
<feature type="helix" evidence="11">
    <location>
        <begin position="117"/>
        <end position="120"/>
    </location>
</feature>
<feature type="helix" evidence="11">
    <location>
        <begin position="128"/>
        <end position="131"/>
    </location>
</feature>
<feature type="turn" evidence="11">
    <location>
        <begin position="132"/>
        <end position="134"/>
    </location>
</feature>
<feature type="helix" evidence="11">
    <location>
        <begin position="137"/>
        <end position="139"/>
    </location>
</feature>
<feature type="helix" evidence="11">
    <location>
        <begin position="144"/>
        <end position="149"/>
    </location>
</feature>
<feature type="helix" evidence="11">
    <location>
        <begin position="155"/>
        <end position="181"/>
    </location>
</feature>
<feature type="strand" evidence="11">
    <location>
        <begin position="185"/>
        <end position="189"/>
    </location>
</feature>
<feature type="helix" evidence="11">
    <location>
        <begin position="191"/>
        <end position="194"/>
    </location>
</feature>
<feature type="helix" evidence="11">
    <location>
        <begin position="195"/>
        <end position="203"/>
    </location>
</feature>
<feature type="helix" evidence="11">
    <location>
        <begin position="209"/>
        <end position="223"/>
    </location>
</feature>
<feature type="strand" evidence="11">
    <location>
        <begin position="230"/>
        <end position="235"/>
    </location>
</feature>
<feature type="helix" evidence="11">
    <location>
        <begin position="239"/>
        <end position="249"/>
    </location>
</feature>
<feature type="helix" evidence="11">
    <location>
        <begin position="252"/>
        <end position="256"/>
    </location>
</feature>
<feature type="strand" evidence="11">
    <location>
        <begin position="258"/>
        <end position="260"/>
    </location>
</feature>
<feature type="helix" evidence="11">
    <location>
        <begin position="262"/>
        <end position="274"/>
    </location>
</feature>
<feature type="helix" evidence="11">
    <location>
        <begin position="276"/>
        <end position="280"/>
    </location>
</feature>
<feature type="turn" evidence="11">
    <location>
        <begin position="281"/>
        <end position="283"/>
    </location>
</feature>
<feature type="strand" evidence="11">
    <location>
        <begin position="284"/>
        <end position="290"/>
    </location>
</feature>
<feature type="turn" evidence="11">
    <location>
        <begin position="292"/>
        <end position="294"/>
    </location>
</feature>
<feature type="helix" evidence="11">
    <location>
        <begin position="298"/>
        <end position="306"/>
    </location>
</feature>
<feature type="turn" evidence="11">
    <location>
        <begin position="311"/>
        <end position="313"/>
    </location>
</feature>
<feature type="helix" evidence="11">
    <location>
        <begin position="329"/>
        <end position="341"/>
    </location>
</feature>
<feature type="helix" evidence="11">
    <location>
        <begin position="343"/>
        <end position="348"/>
    </location>
</feature>
<feature type="turn" evidence="11">
    <location>
        <begin position="358"/>
        <end position="360"/>
    </location>
</feature>
<feature type="helix" evidence="11">
    <location>
        <begin position="364"/>
        <end position="375"/>
    </location>
</feature>
<feature type="strand" evidence="11">
    <location>
        <begin position="381"/>
        <end position="383"/>
    </location>
</feature>
<feature type="helix" evidence="11">
    <location>
        <begin position="388"/>
        <end position="390"/>
    </location>
</feature>
<feature type="turn" evidence="11">
    <location>
        <begin position="395"/>
        <end position="397"/>
    </location>
</feature>
<comment type="function">
    <text evidence="7">Accessory subunit of the mitochondrial membrane respiratory chain NADH dehydrogenase (Complex I), that is believed not to be involved in catalysis. Complex I functions in the transfer of electrons from NADH to the respiratory chain. The immediate electron acceptor for the enzyme is believed to be ubiquinone.</text>
</comment>
<comment type="cofactor">
    <cofactor evidence="1">
        <name>FAD</name>
        <dbReference type="ChEBI" id="CHEBI:57692"/>
    </cofactor>
    <text evidence="1">Binds 1 FAD per subunit.</text>
</comment>
<comment type="subunit">
    <text evidence="3 7">Complex I is composed of 45 different subunits. This a component of the hydrophobic protein fraction (PubMed:28683319). Forms a complex including sicily, ND-42 and Hsp83; the complex is necessary to chaperone ND-42 in the cytoplasm before mitochondrial import; the interaction between sicily and ND-42 is direct and occurs preferably between the unprocessed forms in the cytoplasm (PubMed:23509070).</text>
</comment>
<comment type="subcellular location">
    <subcellularLocation>
        <location evidence="3 7">Mitochondrion matrix</location>
    </subcellularLocation>
    <subcellularLocation>
        <location evidence="3">Cytoplasm</location>
    </subcellularLocation>
</comment>
<comment type="tissue specificity">
    <text evidence="7">Expressed in muscles (at protein level).</text>
</comment>
<comment type="disruption phenotype">
    <text evidence="3 6">RNAi-mediated knockdown leads to loss of ND-30 and reduced mitochondrial membrane respiratory chain NADH dehydrogenase (Complex I) activity (PubMed:23509070). Larvae exhibit elevated reactive oxygen species (ROS) and an up-regulation of Hsp60 (PubMed:23509070). RNAi-mediated knockdown in the eye results in retinal degeneration exacerbated with aging and accompanied by high levels of ROS and accumulation of lipid droplets in the glia (PubMed:23509070, PubMed:25594180). RNAi-mediated knockdown in neurons results in lipid droplet accumulation and increased levels of peroxidated lipids (PubMed:25594180).</text>
</comment>
<comment type="similarity">
    <text evidence="9">Belongs to the complex I NDUFA10 subunit family.</text>
</comment>
<dbReference type="EMBL" id="AE014297">
    <property type="protein sequence ID" value="AAF55947.1"/>
    <property type="molecule type" value="Genomic_DNA"/>
</dbReference>
<dbReference type="EMBL" id="AY051764">
    <property type="protein sequence ID" value="AAK93188.1"/>
    <property type="molecule type" value="mRNA"/>
</dbReference>
<dbReference type="EMBL" id="Y10911">
    <property type="protein sequence ID" value="CAA71852.1"/>
    <property type="molecule type" value="mRNA"/>
</dbReference>
<dbReference type="RefSeq" id="NP_001262821.1">
    <property type="nucleotide sequence ID" value="NM_001275892.1"/>
</dbReference>
<dbReference type="RefSeq" id="NP_524445.1">
    <property type="nucleotide sequence ID" value="NM_079721.4"/>
</dbReference>
<dbReference type="RefSeq" id="NP_732692.1">
    <property type="nucleotide sequence ID" value="NM_169990.3"/>
</dbReference>
<dbReference type="PDB" id="8B9Z">
    <property type="method" value="EM"/>
    <property type="resolution" value="3.28 A"/>
    <property type="chains" value="O=40-407"/>
</dbReference>
<dbReference type="PDB" id="8BA0">
    <property type="method" value="EM"/>
    <property type="resolution" value="3.68 A"/>
    <property type="chains" value="O=40-407"/>
</dbReference>
<dbReference type="PDB" id="8ESW">
    <property type="method" value="EM"/>
    <property type="resolution" value="3.30 A"/>
    <property type="chains" value="AL=1-407"/>
</dbReference>
<dbReference type="PDB" id="8ESZ">
    <property type="method" value="EM"/>
    <property type="resolution" value="3.40 A"/>
    <property type="chains" value="AL=1-407"/>
</dbReference>
<dbReference type="PDBsum" id="8B9Z"/>
<dbReference type="PDBsum" id="8BA0"/>
<dbReference type="PDBsum" id="8ESW"/>
<dbReference type="PDBsum" id="8ESZ"/>
<dbReference type="EMDB" id="EMD-15936"/>
<dbReference type="EMDB" id="EMD-15937"/>
<dbReference type="EMDB" id="EMD-28581"/>
<dbReference type="EMDB" id="EMD-28582"/>
<dbReference type="SMR" id="P91929"/>
<dbReference type="BioGRID" id="67552">
    <property type="interactions" value="21"/>
</dbReference>
<dbReference type="ComplexPortal" id="CPX-8628">
    <property type="entry name" value="Mitochondrial respiratory chain complex I"/>
</dbReference>
<dbReference type="ComplexPortal" id="CPX-8638">
    <property type="entry name" value="Mitochondrial respiratory chain complex I, testis-specific variant"/>
</dbReference>
<dbReference type="DIP" id="DIP-21667N"/>
<dbReference type="FunCoup" id="P91929">
    <property type="interactions" value="1130"/>
</dbReference>
<dbReference type="IntAct" id="P91929">
    <property type="interactions" value="5"/>
</dbReference>
<dbReference type="STRING" id="7227.FBpp0083571"/>
<dbReference type="PaxDb" id="7227-FBpp0083570"/>
<dbReference type="DNASU" id="42591"/>
<dbReference type="EnsemblMetazoa" id="FBtr0084172">
    <property type="protein sequence ID" value="FBpp0083570"/>
    <property type="gene ID" value="FBgn0019957"/>
</dbReference>
<dbReference type="EnsemblMetazoa" id="FBtr0084173">
    <property type="protein sequence ID" value="FBpp0083571"/>
    <property type="gene ID" value="FBgn0019957"/>
</dbReference>
<dbReference type="EnsemblMetazoa" id="FBtr0335194">
    <property type="protein sequence ID" value="FBpp0307181"/>
    <property type="gene ID" value="FBgn0019957"/>
</dbReference>
<dbReference type="GeneID" id="42591"/>
<dbReference type="KEGG" id="dme:Dmel_CG6343"/>
<dbReference type="AGR" id="FB:FBgn0019957"/>
<dbReference type="CTD" id="42591"/>
<dbReference type="FlyBase" id="FBgn0019957">
    <property type="gene designation" value="ND-42"/>
</dbReference>
<dbReference type="VEuPathDB" id="VectorBase:FBgn0019957"/>
<dbReference type="eggNOG" id="KOG3877">
    <property type="taxonomic scope" value="Eukaryota"/>
</dbReference>
<dbReference type="GeneTree" id="ENSGT00390000016151"/>
<dbReference type="HOGENOM" id="CLU_050591_1_0_1"/>
<dbReference type="InParanoid" id="P91929"/>
<dbReference type="OMA" id="DPHNKKM"/>
<dbReference type="OrthoDB" id="17400at2759"/>
<dbReference type="PhylomeDB" id="P91929"/>
<dbReference type="Reactome" id="R-DME-611105">
    <property type="pathway name" value="Respiratory electron transport"/>
</dbReference>
<dbReference type="Reactome" id="R-DME-6799198">
    <property type="pathway name" value="Complex I biogenesis"/>
</dbReference>
<dbReference type="BioGRID-ORCS" id="42591">
    <property type="hits" value="0 hits in 3 CRISPR screens"/>
</dbReference>
<dbReference type="GenomeRNAi" id="42591"/>
<dbReference type="PRO" id="PR:P91929"/>
<dbReference type="Proteomes" id="UP000000803">
    <property type="component" value="Chromosome 3R"/>
</dbReference>
<dbReference type="Bgee" id="FBgn0019957">
    <property type="expression patterns" value="Expressed in second segment of antenna (Drosophila) and 254 other cell types or tissues"/>
</dbReference>
<dbReference type="ExpressionAtlas" id="P91929">
    <property type="expression patterns" value="baseline and differential"/>
</dbReference>
<dbReference type="GO" id="GO:0005737">
    <property type="term" value="C:cytoplasm"/>
    <property type="evidence" value="ECO:0000314"/>
    <property type="project" value="UniProtKB"/>
</dbReference>
<dbReference type="GO" id="GO:0005743">
    <property type="term" value="C:mitochondrial inner membrane"/>
    <property type="evidence" value="ECO:0000305"/>
    <property type="project" value="FlyBase"/>
</dbReference>
<dbReference type="GO" id="GO:0005759">
    <property type="term" value="C:mitochondrial matrix"/>
    <property type="evidence" value="ECO:0007669"/>
    <property type="project" value="UniProtKB-SubCell"/>
</dbReference>
<dbReference type="GO" id="GO:0005739">
    <property type="term" value="C:mitochondrion"/>
    <property type="evidence" value="ECO:0000314"/>
    <property type="project" value="UniProtKB"/>
</dbReference>
<dbReference type="GO" id="GO:0045271">
    <property type="term" value="C:respiratory chain complex I"/>
    <property type="evidence" value="ECO:0000314"/>
    <property type="project" value="FlyBase"/>
</dbReference>
<dbReference type="GO" id="GO:0006120">
    <property type="term" value="P:mitochondrial electron transport, NADH to ubiquinone"/>
    <property type="evidence" value="ECO:0000250"/>
    <property type="project" value="FlyBase"/>
</dbReference>
<dbReference type="CDD" id="cd02030">
    <property type="entry name" value="NDUO42"/>
    <property type="match status" value="1"/>
</dbReference>
<dbReference type="FunFam" id="3.40.50.300:FF:001768">
    <property type="entry name" value="NADH dehydrogenase [ubiquinone] 1 alpha subcomplex subunit 10, mitochondrial"/>
    <property type="match status" value="1"/>
</dbReference>
<dbReference type="Gene3D" id="3.40.50.300">
    <property type="entry name" value="P-loop containing nucleotide triphosphate hydrolases"/>
    <property type="match status" value="1"/>
</dbReference>
<dbReference type="InterPro" id="IPR050566">
    <property type="entry name" value="Deoxyribonucleoside_kinase"/>
</dbReference>
<dbReference type="InterPro" id="IPR031314">
    <property type="entry name" value="DNK_dom"/>
</dbReference>
<dbReference type="InterPro" id="IPR015828">
    <property type="entry name" value="NDUFA10"/>
</dbReference>
<dbReference type="InterPro" id="IPR027417">
    <property type="entry name" value="P-loop_NTPase"/>
</dbReference>
<dbReference type="PANTHER" id="PTHR10513">
    <property type="entry name" value="DEOXYNUCLEOSIDE KINASE"/>
    <property type="match status" value="1"/>
</dbReference>
<dbReference type="PANTHER" id="PTHR10513:SF15">
    <property type="entry name" value="NADH DEHYDROGENASE [UBIQUINONE] 1 ALPHA SUBCOMPLEX SUBUNIT 10, MITOCHONDRIAL"/>
    <property type="match status" value="1"/>
</dbReference>
<dbReference type="Pfam" id="PF01712">
    <property type="entry name" value="dNK"/>
    <property type="match status" value="1"/>
</dbReference>
<dbReference type="PIRSF" id="PIRSF000543">
    <property type="entry name" value="NADH_UQ_42KD"/>
    <property type="match status" value="1"/>
</dbReference>
<dbReference type="SUPFAM" id="SSF52540">
    <property type="entry name" value="P-loop containing nucleoside triphosphate hydrolases"/>
    <property type="match status" value="1"/>
</dbReference>
<keyword id="KW-0002">3D-structure</keyword>
<keyword id="KW-0963">Cytoplasm</keyword>
<keyword id="KW-0249">Electron transport</keyword>
<keyword id="KW-0274">FAD</keyword>
<keyword id="KW-0285">Flavoprotein</keyword>
<keyword id="KW-0496">Mitochondrion</keyword>
<keyword id="KW-1185">Reference proteome</keyword>
<keyword id="KW-0679">Respiratory chain</keyword>
<keyword id="KW-0809">Transit peptide</keyword>
<keyword id="KW-0813">Transport</keyword>
<name>NDUAA_DROME</name>
<reference key="1">
    <citation type="journal article" date="2000" name="Science">
        <title>The genome sequence of Drosophila melanogaster.</title>
        <authorList>
            <person name="Adams M.D."/>
            <person name="Celniker S.E."/>
            <person name="Holt R.A."/>
            <person name="Evans C.A."/>
            <person name="Gocayne J.D."/>
            <person name="Amanatides P.G."/>
            <person name="Scherer S.E."/>
            <person name="Li P.W."/>
            <person name="Hoskins R.A."/>
            <person name="Galle R.F."/>
            <person name="George R.A."/>
            <person name="Lewis S.E."/>
            <person name="Richards S."/>
            <person name="Ashburner M."/>
            <person name="Henderson S.N."/>
            <person name="Sutton G.G."/>
            <person name="Wortman J.R."/>
            <person name="Yandell M.D."/>
            <person name="Zhang Q."/>
            <person name="Chen L.X."/>
            <person name="Brandon R.C."/>
            <person name="Rogers Y.-H.C."/>
            <person name="Blazej R.G."/>
            <person name="Champe M."/>
            <person name="Pfeiffer B.D."/>
            <person name="Wan K.H."/>
            <person name="Doyle C."/>
            <person name="Baxter E.G."/>
            <person name="Helt G."/>
            <person name="Nelson C.R."/>
            <person name="Miklos G.L.G."/>
            <person name="Abril J.F."/>
            <person name="Agbayani A."/>
            <person name="An H.-J."/>
            <person name="Andrews-Pfannkoch C."/>
            <person name="Baldwin D."/>
            <person name="Ballew R.M."/>
            <person name="Basu A."/>
            <person name="Baxendale J."/>
            <person name="Bayraktaroglu L."/>
            <person name="Beasley E.M."/>
            <person name="Beeson K.Y."/>
            <person name="Benos P.V."/>
            <person name="Berman B.P."/>
            <person name="Bhandari D."/>
            <person name="Bolshakov S."/>
            <person name="Borkova D."/>
            <person name="Botchan M.R."/>
            <person name="Bouck J."/>
            <person name="Brokstein P."/>
            <person name="Brottier P."/>
            <person name="Burtis K.C."/>
            <person name="Busam D.A."/>
            <person name="Butler H."/>
            <person name="Cadieu E."/>
            <person name="Center A."/>
            <person name="Chandra I."/>
            <person name="Cherry J.M."/>
            <person name="Cawley S."/>
            <person name="Dahlke C."/>
            <person name="Davenport L.B."/>
            <person name="Davies P."/>
            <person name="de Pablos B."/>
            <person name="Delcher A."/>
            <person name="Deng Z."/>
            <person name="Mays A.D."/>
            <person name="Dew I."/>
            <person name="Dietz S.M."/>
            <person name="Dodson K."/>
            <person name="Doup L.E."/>
            <person name="Downes M."/>
            <person name="Dugan-Rocha S."/>
            <person name="Dunkov B.C."/>
            <person name="Dunn P."/>
            <person name="Durbin K.J."/>
            <person name="Evangelista C.C."/>
            <person name="Ferraz C."/>
            <person name="Ferriera S."/>
            <person name="Fleischmann W."/>
            <person name="Fosler C."/>
            <person name="Gabrielian A.E."/>
            <person name="Garg N.S."/>
            <person name="Gelbart W.M."/>
            <person name="Glasser K."/>
            <person name="Glodek A."/>
            <person name="Gong F."/>
            <person name="Gorrell J.H."/>
            <person name="Gu Z."/>
            <person name="Guan P."/>
            <person name="Harris M."/>
            <person name="Harris N.L."/>
            <person name="Harvey D.A."/>
            <person name="Heiman T.J."/>
            <person name="Hernandez J.R."/>
            <person name="Houck J."/>
            <person name="Hostin D."/>
            <person name="Houston K.A."/>
            <person name="Howland T.J."/>
            <person name="Wei M.-H."/>
            <person name="Ibegwam C."/>
            <person name="Jalali M."/>
            <person name="Kalush F."/>
            <person name="Karpen G.H."/>
            <person name="Ke Z."/>
            <person name="Kennison J.A."/>
            <person name="Ketchum K.A."/>
            <person name="Kimmel B.E."/>
            <person name="Kodira C.D."/>
            <person name="Kraft C.L."/>
            <person name="Kravitz S."/>
            <person name="Kulp D."/>
            <person name="Lai Z."/>
            <person name="Lasko P."/>
            <person name="Lei Y."/>
            <person name="Levitsky A.A."/>
            <person name="Li J.H."/>
            <person name="Li Z."/>
            <person name="Liang Y."/>
            <person name="Lin X."/>
            <person name="Liu X."/>
            <person name="Mattei B."/>
            <person name="McIntosh T.C."/>
            <person name="McLeod M.P."/>
            <person name="McPherson D."/>
            <person name="Merkulov G."/>
            <person name="Milshina N.V."/>
            <person name="Mobarry C."/>
            <person name="Morris J."/>
            <person name="Moshrefi A."/>
            <person name="Mount S.M."/>
            <person name="Moy M."/>
            <person name="Murphy B."/>
            <person name="Murphy L."/>
            <person name="Muzny D.M."/>
            <person name="Nelson D.L."/>
            <person name="Nelson D.R."/>
            <person name="Nelson K.A."/>
            <person name="Nixon K."/>
            <person name="Nusskern D.R."/>
            <person name="Pacleb J.M."/>
            <person name="Palazzolo M."/>
            <person name="Pittman G.S."/>
            <person name="Pan S."/>
            <person name="Pollard J."/>
            <person name="Puri V."/>
            <person name="Reese M.G."/>
            <person name="Reinert K."/>
            <person name="Remington K."/>
            <person name="Saunders R.D.C."/>
            <person name="Scheeler F."/>
            <person name="Shen H."/>
            <person name="Shue B.C."/>
            <person name="Siden-Kiamos I."/>
            <person name="Simpson M."/>
            <person name="Skupski M.P."/>
            <person name="Smith T.J."/>
            <person name="Spier E."/>
            <person name="Spradling A.C."/>
            <person name="Stapleton M."/>
            <person name="Strong R."/>
            <person name="Sun E."/>
            <person name="Svirskas R."/>
            <person name="Tector C."/>
            <person name="Turner R."/>
            <person name="Venter E."/>
            <person name="Wang A.H."/>
            <person name="Wang X."/>
            <person name="Wang Z.-Y."/>
            <person name="Wassarman D.A."/>
            <person name="Weinstock G.M."/>
            <person name="Weissenbach J."/>
            <person name="Williams S.M."/>
            <person name="Woodage T."/>
            <person name="Worley K.C."/>
            <person name="Wu D."/>
            <person name="Yang S."/>
            <person name="Yao Q.A."/>
            <person name="Ye J."/>
            <person name="Yeh R.-F."/>
            <person name="Zaveri J.S."/>
            <person name="Zhan M."/>
            <person name="Zhang G."/>
            <person name="Zhao Q."/>
            <person name="Zheng L."/>
            <person name="Zheng X.H."/>
            <person name="Zhong F.N."/>
            <person name="Zhong W."/>
            <person name="Zhou X."/>
            <person name="Zhu S.C."/>
            <person name="Zhu X."/>
            <person name="Smith H.O."/>
            <person name="Gibbs R.A."/>
            <person name="Myers E.W."/>
            <person name="Rubin G.M."/>
            <person name="Venter J.C."/>
        </authorList>
    </citation>
    <scope>NUCLEOTIDE SEQUENCE [LARGE SCALE GENOMIC DNA]</scope>
    <source>
        <strain>Berkeley</strain>
    </source>
</reference>
<reference key="2">
    <citation type="journal article" date="2002" name="Genome Biol.">
        <title>Annotation of the Drosophila melanogaster euchromatic genome: a systematic review.</title>
        <authorList>
            <person name="Misra S."/>
            <person name="Crosby M.A."/>
            <person name="Mungall C.J."/>
            <person name="Matthews B.B."/>
            <person name="Campbell K.S."/>
            <person name="Hradecky P."/>
            <person name="Huang Y."/>
            <person name="Kaminker J.S."/>
            <person name="Millburn G.H."/>
            <person name="Prochnik S.E."/>
            <person name="Smith C.D."/>
            <person name="Tupy J.L."/>
            <person name="Whitfield E.J."/>
            <person name="Bayraktaroglu L."/>
            <person name="Berman B.P."/>
            <person name="Bettencourt B.R."/>
            <person name="Celniker S.E."/>
            <person name="de Grey A.D.N.J."/>
            <person name="Drysdale R.A."/>
            <person name="Harris N.L."/>
            <person name="Richter J."/>
            <person name="Russo S."/>
            <person name="Schroeder A.J."/>
            <person name="Shu S.Q."/>
            <person name="Stapleton M."/>
            <person name="Yamada C."/>
            <person name="Ashburner M."/>
            <person name="Gelbart W.M."/>
            <person name="Rubin G.M."/>
            <person name="Lewis S.E."/>
        </authorList>
    </citation>
    <scope>GENOME REANNOTATION</scope>
    <source>
        <strain>Berkeley</strain>
    </source>
</reference>
<reference key="3">
    <citation type="journal article" date="2002" name="Genome Biol.">
        <title>A Drosophila full-length cDNA resource.</title>
        <authorList>
            <person name="Stapleton M."/>
            <person name="Carlson J.W."/>
            <person name="Brokstein P."/>
            <person name="Yu C."/>
            <person name="Champe M."/>
            <person name="George R.A."/>
            <person name="Guarin H."/>
            <person name="Kronmiller B."/>
            <person name="Pacleb J.M."/>
            <person name="Park S."/>
            <person name="Wan K.H."/>
            <person name="Rubin G.M."/>
            <person name="Celniker S.E."/>
        </authorList>
    </citation>
    <scope>NUCLEOTIDE SEQUENCE [LARGE SCALE MRNA]</scope>
    <source>
        <strain>Berkeley</strain>
        <tissue>Embryo</tissue>
    </source>
</reference>
<reference key="4">
    <citation type="journal article" date="1999" name="Mol. Gen. Genet.">
        <title>Identification of nuclear genes encoding mitochondrial proteins: isolation of a collection of D. melanogaster cDNAs homologous to sequences in the Human Gene Index database.</title>
        <authorList>
            <person name="Caggese C."/>
            <person name="Ragone G."/>
            <person name="Perrini B."/>
            <person name="Moschetti R."/>
            <person name="de Pinto V."/>
            <person name="Caizzi R."/>
            <person name="Barsanti P."/>
        </authorList>
    </citation>
    <scope>NUCLEOTIDE SEQUENCE [MRNA] OF 45-205</scope>
    <source>
        <tissue>Ovary</tissue>
    </source>
</reference>
<reference key="5">
    <citation type="journal article" date="2013" name="J. Cell Biol.">
        <title>The C8ORF38 homologue Sicily is a cytosolic chaperone for a mitochondrial complex I subunit.</title>
        <authorList>
            <person name="Zhang K."/>
            <person name="Li Z."/>
            <person name="Jaiswal M."/>
            <person name="Bayat V."/>
            <person name="Xiong B."/>
            <person name="Sandoval H."/>
            <person name="Charng W.L."/>
            <person name="David G."/>
            <person name="Haueter C."/>
            <person name="Yamamoto S."/>
            <person name="Graham B.H."/>
            <person name="Bellen H.J."/>
        </authorList>
    </citation>
    <scope>IDENTIFICATION BY MASS SPECTROMETRY</scope>
    <scope>IDENTIFICATION IN A COMPLEX WITH SICILY AND HSP83</scope>
    <scope>INTERACTION WITH SICILY</scope>
    <scope>SUBCELLULAR LOCATION</scope>
    <scope>DISRUPTION PHENOTYPE</scope>
    <scope>MUTAGENESIS OF 1-MET--GLY-47</scope>
</reference>
<reference key="6">
    <citation type="journal article" date="2014" name="PLoS Genet.">
        <title>The complex I subunit NDUFA10 selectively rescues Drosophila pink1 mutants through a mechanism independent of mitophagy.</title>
        <authorList>
            <person name="Pogson J.H."/>
            <person name="Ivatt R.M."/>
            <person name="Sanchez-Martinez A."/>
            <person name="Tufi R."/>
            <person name="Wilson E."/>
            <person name="Mortiboys H."/>
            <person name="Whitworth A.J."/>
        </authorList>
    </citation>
    <scope>MUTAGENESIS OF SER-281</scope>
</reference>
<reference key="7">
    <citation type="journal article" date="2014" name="Science">
        <title>PINK1 loss-of-function mutations affect mitochondrial complex I activity via NdufA10 ubiquinone uncoupling.</title>
        <authorList>
            <person name="Morais V.A."/>
            <person name="Haddad D."/>
            <person name="Craessaerts K."/>
            <person name="De Bock P.J."/>
            <person name="Swerts J."/>
            <person name="Vilain S."/>
            <person name="Aerts L."/>
            <person name="Overbergh L."/>
            <person name="Gruenewald A."/>
            <person name="Seibler P."/>
            <person name="Klein C."/>
            <person name="Gevaert K."/>
            <person name="Verstreken P."/>
            <person name="De Strooper B."/>
        </authorList>
    </citation>
    <scope>MUTAGENESIS OF SER-281</scope>
</reference>
<reference key="8">
    <citation type="journal article" date="2015" name="Cell">
        <title>Glial lipid droplets and ROS induced by mitochondrial defects promote neurodegeneration.</title>
        <authorList>
            <person name="Liu L."/>
            <person name="Zhang K."/>
            <person name="Sandoval H."/>
            <person name="Yamamoto S."/>
            <person name="Jaiswal M."/>
            <person name="Sanz E."/>
            <person name="Li Z."/>
            <person name="Hui J."/>
            <person name="Graham B.H."/>
            <person name="Quintana A."/>
            <person name="Bellen H.J."/>
        </authorList>
    </citation>
    <scope>DISRUPTION PHENOTYPE</scope>
</reference>
<reference key="9">
    <citation type="journal article" date="2017" name="Cell Rep.">
        <title>Regulation of Mitochondrial Complex I Biogenesis in Drosophila Flight Muscles.</title>
        <authorList>
            <person name="Garcia C.J."/>
            <person name="Khajeh J."/>
            <person name="Coulanges E."/>
            <person name="Chen E.I."/>
            <person name="Owusu-Ansah E."/>
        </authorList>
    </citation>
    <scope>IDENTIFICATION BY MASS SPECTROMETRY</scope>
    <scope>FUNCTION</scope>
    <scope>IDENTIFICATION IN THE NADH-UBIQUINONE OXIDOREDUCTASE COMPLEX</scope>
    <scope>SUBCELLULAR LOCATION</scope>
    <scope>TISSUE SPECIFICITY</scope>
</reference>
<protein>
    <recommendedName>
        <fullName>NADH dehydrogenase [ubiquinone] 1 alpha subcomplex subunit 10, mitochondrial</fullName>
    </recommendedName>
    <alternativeName>
        <fullName>Complex I-42kD</fullName>
        <shortName>CI-42kD</shortName>
    </alternativeName>
    <alternativeName>
        <fullName>NADH-ubiquinone oxidoreductase 42 kDa subunit</fullName>
    </alternativeName>
</protein>
<proteinExistence type="evidence at protein level"/>
<organism>
    <name type="scientific">Drosophila melanogaster</name>
    <name type="common">Fruit fly</name>
    <dbReference type="NCBI Taxonomy" id="7227"/>
    <lineage>
        <taxon>Eukaryota</taxon>
        <taxon>Metazoa</taxon>
        <taxon>Ecdysozoa</taxon>
        <taxon>Arthropoda</taxon>
        <taxon>Hexapoda</taxon>
        <taxon>Insecta</taxon>
        <taxon>Pterygota</taxon>
        <taxon>Neoptera</taxon>
        <taxon>Endopterygota</taxon>
        <taxon>Diptera</taxon>
        <taxon>Brachycera</taxon>
        <taxon>Muscomorpha</taxon>
        <taxon>Ephydroidea</taxon>
        <taxon>Drosophilidae</taxon>
        <taxon>Drosophila</taxon>
        <taxon>Sophophora</taxon>
    </lineage>
</organism>
<accession>P91929</accession>
<accession>Q9VD54</accession>
<evidence type="ECO:0000250" key="1"/>
<evidence type="ECO:0000255" key="2"/>
<evidence type="ECO:0000269" key="3">
    <source>
    </source>
</evidence>
<evidence type="ECO:0000269" key="4">
    <source>
    </source>
</evidence>
<evidence type="ECO:0000269" key="5">
    <source>
    </source>
</evidence>
<evidence type="ECO:0000269" key="6">
    <source>
    </source>
</evidence>
<evidence type="ECO:0000269" key="7">
    <source>
    </source>
</evidence>
<evidence type="ECO:0000303" key="8">
    <source>
    </source>
</evidence>
<evidence type="ECO:0000305" key="9"/>
<evidence type="ECO:0000312" key="10">
    <source>
        <dbReference type="FlyBase" id="FBgn0019957"/>
    </source>
</evidence>
<evidence type="ECO:0007829" key="11">
    <source>
        <dbReference type="PDB" id="8B9Z"/>
    </source>
</evidence>
<sequence length="407" mass="46898">MTAVFRVGLVRLVSRATQSPNLLQAQTNALPAAFQQRCSISGKTMRGGPRVPKAAPYPYKTKKYSVFNAIFDKTSKRFDENSKVICVEGPIAAGKSKFAKELAEELDMEYYPAVDLDLIYINSYGYDMRKLDPQLPPSCRSYDVRNFCLDPSHDLAAQFQIRMYMLRYSQYIDALQHVLSTGQGVVLERSPYSDFVFMEAMFRQGYLSRGARSVYNELRQNTIGELLKPHLVIYLDLPVDAVKKQIKARNVDYEVQSKVFSDAYLSDLEQLYKQQYLKDISTHAELLIYDWTAGGETEVVVEDIERIDFNQFEADIHNKKMLDWRFPLEAEWCEARIKYCHEKPDLMNYFNVPRFDVPELVRSADDGKVWRDVWFNAPGMKYRPGYNADMGDEGLLTKTKIGINQGI</sequence>